<reference key="1">
    <citation type="journal article" date="1998" name="Mol. Biol. Evol.">
        <title>Evolution of RPS4Y.</title>
        <authorList>
            <person name="Bergen A.W."/>
            <person name="Pratt M."/>
            <person name="Mehlman P."/>
            <person name="Goldman D."/>
        </authorList>
    </citation>
    <scope>NUCLEOTIDE SEQUENCE [GENOMIC DNA]</scope>
</reference>
<organism>
    <name type="scientific">Gorilla gorilla gorilla</name>
    <name type="common">Western lowland gorilla</name>
    <dbReference type="NCBI Taxonomy" id="9595"/>
    <lineage>
        <taxon>Eukaryota</taxon>
        <taxon>Metazoa</taxon>
        <taxon>Chordata</taxon>
        <taxon>Craniata</taxon>
        <taxon>Vertebrata</taxon>
        <taxon>Euteleostomi</taxon>
        <taxon>Mammalia</taxon>
        <taxon>Eutheria</taxon>
        <taxon>Euarchontoglires</taxon>
        <taxon>Primates</taxon>
        <taxon>Haplorrhini</taxon>
        <taxon>Catarrhini</taxon>
        <taxon>Hominidae</taxon>
        <taxon>Gorilla</taxon>
    </lineage>
</organism>
<dbReference type="EMBL" id="AH012492">
    <property type="protein sequence ID" value="AAO37288.1"/>
    <property type="molecule type" value="Genomic_DNA"/>
</dbReference>
<dbReference type="SMR" id="Q861U8"/>
<dbReference type="FunCoup" id="Q861U8">
    <property type="interactions" value="813"/>
</dbReference>
<dbReference type="STRING" id="9593.ENSGGOP00000019621"/>
<dbReference type="eggNOG" id="KOG0378">
    <property type="taxonomic scope" value="Eukaryota"/>
</dbReference>
<dbReference type="InParanoid" id="Q861U8"/>
<dbReference type="Proteomes" id="UP000001519">
    <property type="component" value="Unplaced"/>
</dbReference>
<dbReference type="GO" id="GO:0022627">
    <property type="term" value="C:cytosolic small ribosomal subunit"/>
    <property type="evidence" value="ECO:0000318"/>
    <property type="project" value="GO_Central"/>
</dbReference>
<dbReference type="GO" id="GO:0003723">
    <property type="term" value="F:RNA binding"/>
    <property type="evidence" value="ECO:0000318"/>
    <property type="project" value="GO_Central"/>
</dbReference>
<dbReference type="GO" id="GO:0019843">
    <property type="term" value="F:rRNA binding"/>
    <property type="evidence" value="ECO:0007669"/>
    <property type="project" value="UniProtKB-KW"/>
</dbReference>
<dbReference type="GO" id="GO:0003735">
    <property type="term" value="F:structural constituent of ribosome"/>
    <property type="evidence" value="ECO:0000318"/>
    <property type="project" value="GO_Central"/>
</dbReference>
<dbReference type="GO" id="GO:0006412">
    <property type="term" value="P:translation"/>
    <property type="evidence" value="ECO:0000318"/>
    <property type="project" value="GO_Central"/>
</dbReference>
<dbReference type="CDD" id="cd06087">
    <property type="entry name" value="KOW_RPS4"/>
    <property type="match status" value="1"/>
</dbReference>
<dbReference type="CDD" id="cd00165">
    <property type="entry name" value="S4"/>
    <property type="match status" value="1"/>
</dbReference>
<dbReference type="FunFam" id="2.30.30.30:FF:000005">
    <property type="entry name" value="40S ribosomal protein S4"/>
    <property type="match status" value="1"/>
</dbReference>
<dbReference type="FunFam" id="2.40.50.740:FF:000001">
    <property type="entry name" value="40S ribosomal protein S4"/>
    <property type="match status" value="1"/>
</dbReference>
<dbReference type="FunFam" id="3.10.290.10:FF:000051">
    <property type="entry name" value="40S ribosomal protein S4, X isoform"/>
    <property type="match status" value="1"/>
</dbReference>
<dbReference type="Gene3D" id="2.30.30.30">
    <property type="match status" value="1"/>
</dbReference>
<dbReference type="Gene3D" id="2.40.50.740">
    <property type="match status" value="1"/>
</dbReference>
<dbReference type="Gene3D" id="3.10.290.10">
    <property type="entry name" value="RNA-binding S4 domain"/>
    <property type="match status" value="1"/>
</dbReference>
<dbReference type="HAMAP" id="MF_00485">
    <property type="entry name" value="Ribosomal_eS4"/>
    <property type="match status" value="1"/>
</dbReference>
<dbReference type="InterPro" id="IPR005824">
    <property type="entry name" value="KOW"/>
</dbReference>
<dbReference type="InterPro" id="IPR014722">
    <property type="entry name" value="Rib_uL2_dom2"/>
</dbReference>
<dbReference type="InterPro" id="IPR000876">
    <property type="entry name" value="Ribosomal_eS4"/>
</dbReference>
<dbReference type="InterPro" id="IPR032277">
    <property type="entry name" value="Ribosomal_eS4_C"/>
</dbReference>
<dbReference type="InterPro" id="IPR013845">
    <property type="entry name" value="Ribosomal_eS4_central_region"/>
</dbReference>
<dbReference type="InterPro" id="IPR038237">
    <property type="entry name" value="Ribosomal_eS4_central_sf"/>
</dbReference>
<dbReference type="InterPro" id="IPR041982">
    <property type="entry name" value="Ribosomal_eS4_KOW"/>
</dbReference>
<dbReference type="InterPro" id="IPR013843">
    <property type="entry name" value="Ribosomal_eS4_N"/>
</dbReference>
<dbReference type="InterPro" id="IPR018199">
    <property type="entry name" value="Ribosomal_eS4_N_CS"/>
</dbReference>
<dbReference type="InterPro" id="IPR002942">
    <property type="entry name" value="S4_RNA-bd"/>
</dbReference>
<dbReference type="InterPro" id="IPR036986">
    <property type="entry name" value="S4_RNA-bd_sf"/>
</dbReference>
<dbReference type="PANTHER" id="PTHR11581">
    <property type="entry name" value="30S/40S RIBOSOMAL PROTEIN S4"/>
    <property type="match status" value="1"/>
</dbReference>
<dbReference type="PANTHER" id="PTHR11581:SF8">
    <property type="entry name" value="SMALL RIBOSOMAL SUBUNIT PROTEIN ES4, Y ISOFORM 1"/>
    <property type="match status" value="1"/>
</dbReference>
<dbReference type="Pfam" id="PF16121">
    <property type="entry name" value="40S_S4_C"/>
    <property type="match status" value="1"/>
</dbReference>
<dbReference type="Pfam" id="PF00467">
    <property type="entry name" value="KOW"/>
    <property type="match status" value="1"/>
</dbReference>
<dbReference type="Pfam" id="PF00900">
    <property type="entry name" value="Ribosomal_S4e"/>
    <property type="match status" value="1"/>
</dbReference>
<dbReference type="Pfam" id="PF08071">
    <property type="entry name" value="RS4NT"/>
    <property type="match status" value="1"/>
</dbReference>
<dbReference type="PIRSF" id="PIRSF002116">
    <property type="entry name" value="Ribosomal_S4"/>
    <property type="match status" value="1"/>
</dbReference>
<dbReference type="SMART" id="SM00363">
    <property type="entry name" value="S4"/>
    <property type="match status" value="1"/>
</dbReference>
<dbReference type="PROSITE" id="PS00528">
    <property type="entry name" value="RIBOSOMAL_S4E"/>
    <property type="match status" value="1"/>
</dbReference>
<dbReference type="PROSITE" id="PS50889">
    <property type="entry name" value="S4"/>
    <property type="match status" value="1"/>
</dbReference>
<comment type="similarity">
    <text evidence="1">Belongs to the eukaryotic ribosomal protein eS4 family.</text>
</comment>
<gene>
    <name type="primary">RPS4Y1</name>
    <name type="synonym">RPS4Y</name>
</gene>
<accession>Q861U8</accession>
<keyword id="KW-1185">Reference proteome</keyword>
<keyword id="KW-0687">Ribonucleoprotein</keyword>
<keyword id="KW-0689">Ribosomal protein</keyword>
<keyword id="KW-0694">RNA-binding</keyword>
<keyword id="KW-0699">rRNA-binding</keyword>
<protein>
    <recommendedName>
        <fullName evidence="1">Small ribosomal subunit protein eS4</fullName>
    </recommendedName>
    <alternativeName>
        <fullName>40S ribosomal protein S4, Y isoform 1</fullName>
    </alternativeName>
</protein>
<feature type="chain" id="PRO_0000130811" description="Small ribosomal subunit protein eS4">
    <location>
        <begin position="1"/>
        <end position="263"/>
    </location>
</feature>
<feature type="domain" description="S4 RNA-binding">
    <location>
        <begin position="42"/>
        <end position="104"/>
    </location>
</feature>
<sequence>MARGPKKHLKRVAAPKHWMLDKLTGVFAPRPSTGPHKLRECLPLIVFLRNRLKYALTGDEVKKICMQRFIKIDGKVRVDVTYPAGFMDVISIEKTGEHFRLVYDTKGRFAVHRITVEEAKYKLCKVRKITVGVKGIPHLVTHDARTIRYPDPVIKVNDTVQIDLGTGKIINFIKFDTGNLCMVIGGANLGRVGVITNRERHPGSFDVVHVKDANGNSFATRISNIFVIGNGNKPWISLPRGKGIRLTVAEERDKRLATKQSSG</sequence>
<evidence type="ECO:0000305" key="1"/>
<proteinExistence type="inferred from homology"/>
<name>RS4Y1_GORGO</name>